<comment type="function">
    <text evidence="1">Component of the ribosome, a large ribonucleoprotein complex responsible for the synthesis of proteins in the cell. The small ribosomal subunit (SSU) binds messenger RNAs (mRNAs) and translates the encoded message by selecting cognate aminoacyl-transfer RNA (tRNA) molecules. The large subunit (LSU) contains the ribosomal catalytic site termed the peptidyl transferase center (PTC), which catalyzes the formation of peptide bonds, thereby polymerizing the amino acids delivered by tRNAs into a polypeptide chain. The nascent polypeptides leave the ribosome through a tunnel in the LSU and interact with protein factors that function in enzymatic processing, targeting, and the membrane insertion of nascent chains at the exit of the ribosomal tunnel.</text>
</comment>
<comment type="subunit">
    <text evidence="1">Component of the large ribosomal subunit (LSU).</text>
</comment>
<comment type="subcellular location">
    <subcellularLocation>
        <location evidence="1">Cytoplasm</location>
    </subcellularLocation>
    <subcellularLocation>
        <location evidence="1">Nucleus</location>
    </subcellularLocation>
</comment>
<comment type="similarity">
    <text evidence="2">Belongs to the universal ribosomal protein uL18 family.</text>
</comment>
<evidence type="ECO:0000250" key="1">
    <source>
        <dbReference type="UniProtKB" id="P26321"/>
    </source>
</evidence>
<evidence type="ECO:0000305" key="2"/>
<name>RL5_BOMMO</name>
<proteinExistence type="evidence at transcript level"/>
<gene>
    <name type="primary">RpL5</name>
</gene>
<feature type="chain" id="PRO_0000131442" description="Large ribosomal subunit protein uL18">
    <location>
        <begin position="1"/>
        <end position="299"/>
    </location>
</feature>
<feature type="sequence conflict" description="In Ref. 2; AAV34814." evidence="2" ref="2">
    <original>R</original>
    <variation>A</variation>
    <location>
        <position position="157"/>
    </location>
</feature>
<accession>O76190</accession>
<accession>Q5UAT6</accession>
<sequence>MGFVKVVKNKQYFKRYQVKFKRRREGKTDYYARKRLVVQDKNKYNTPKYRLIVRLSNKDVTCQVAYSRIEGDHIVCAAYSHELPRYGVKVGLTNYAAAYSTGLLLARRLLQRLGLDTLYTGTTDVTGDEYNVEPVDNGPGAFRCYLDVGLARTTTGRRVFGAMKGAVDGGLNVPHSIKRFPGYDAESKKFNAEVHRAHIFGLHVAEYMRSLEQDDEDSFKRQFSKYIKLGVTADAIEAIYKKAHEAIRADPSHKKKELKKDSVKQKRWNKRKLTLAERKNRIKQKKASFIKRLQAQAEA</sequence>
<keyword id="KW-0963">Cytoplasm</keyword>
<keyword id="KW-0539">Nucleus</keyword>
<keyword id="KW-1185">Reference proteome</keyword>
<keyword id="KW-0687">Ribonucleoprotein</keyword>
<keyword id="KW-0689">Ribosomal protein</keyword>
<keyword id="KW-0694">RNA-binding</keyword>
<keyword id="KW-0699">rRNA-binding</keyword>
<protein>
    <recommendedName>
        <fullName evidence="2">Large ribosomal subunit protein uL18</fullName>
    </recommendedName>
    <alternativeName>
        <fullName>60S ribosomal protein L5</fullName>
    </alternativeName>
</protein>
<dbReference type="EMBL" id="AF008229">
    <property type="protein sequence ID" value="AAC24960.1"/>
    <property type="molecule type" value="mRNA"/>
</dbReference>
<dbReference type="EMBL" id="AY769272">
    <property type="protein sequence ID" value="AAV34814.1"/>
    <property type="molecule type" value="mRNA"/>
</dbReference>
<dbReference type="RefSeq" id="NP_001037008.1">
    <property type="nucleotide sequence ID" value="NM_001043543.1"/>
</dbReference>
<dbReference type="SMR" id="O76190"/>
<dbReference type="FunCoup" id="O76190">
    <property type="interactions" value="1406"/>
</dbReference>
<dbReference type="STRING" id="7091.O76190"/>
<dbReference type="PaxDb" id="7091-BGIBMGA007879-TA"/>
<dbReference type="EnsemblMetazoa" id="NM_001043543.1">
    <property type="protein sequence ID" value="NP_001037008.1"/>
    <property type="gene ID" value="GeneID_692557"/>
</dbReference>
<dbReference type="GeneID" id="692557"/>
<dbReference type="KEGG" id="bmor:692557"/>
<dbReference type="CTD" id="6125"/>
<dbReference type="eggNOG" id="KOG0875">
    <property type="taxonomic scope" value="Eukaryota"/>
</dbReference>
<dbReference type="HOGENOM" id="CLU_056222_1_0_1"/>
<dbReference type="InParanoid" id="O76190"/>
<dbReference type="OrthoDB" id="301277at7088"/>
<dbReference type="Proteomes" id="UP000005204">
    <property type="component" value="Unassembled WGS sequence"/>
</dbReference>
<dbReference type="GO" id="GO:0022625">
    <property type="term" value="C:cytosolic large ribosomal subunit"/>
    <property type="evidence" value="ECO:0007669"/>
    <property type="project" value="TreeGrafter"/>
</dbReference>
<dbReference type="GO" id="GO:0005634">
    <property type="term" value="C:nucleus"/>
    <property type="evidence" value="ECO:0007669"/>
    <property type="project" value="UniProtKB-SubCell"/>
</dbReference>
<dbReference type="GO" id="GO:0008097">
    <property type="term" value="F:5S rRNA binding"/>
    <property type="evidence" value="ECO:0007669"/>
    <property type="project" value="InterPro"/>
</dbReference>
<dbReference type="GO" id="GO:0003735">
    <property type="term" value="F:structural constituent of ribosome"/>
    <property type="evidence" value="ECO:0007669"/>
    <property type="project" value="InterPro"/>
</dbReference>
<dbReference type="GO" id="GO:0000027">
    <property type="term" value="P:ribosomal large subunit assembly"/>
    <property type="evidence" value="ECO:0007669"/>
    <property type="project" value="TreeGrafter"/>
</dbReference>
<dbReference type="GO" id="GO:0006412">
    <property type="term" value="P:translation"/>
    <property type="evidence" value="ECO:0007669"/>
    <property type="project" value="InterPro"/>
</dbReference>
<dbReference type="CDD" id="cd00432">
    <property type="entry name" value="Ribosomal_L18_L5e"/>
    <property type="match status" value="1"/>
</dbReference>
<dbReference type="FunFam" id="3.30.420.100:FF:000002">
    <property type="entry name" value="60S ribosomal protein L5"/>
    <property type="match status" value="1"/>
</dbReference>
<dbReference type="Gene3D" id="3.30.420.100">
    <property type="match status" value="1"/>
</dbReference>
<dbReference type="HAMAP" id="MF_01337_A">
    <property type="entry name" value="Ribosomal_uL18_A"/>
    <property type="match status" value="1"/>
</dbReference>
<dbReference type="InterPro" id="IPR005485">
    <property type="entry name" value="Rbsml_uL18_euk"/>
</dbReference>
<dbReference type="InterPro" id="IPR025607">
    <property type="entry name" value="Ribosomal_uL18_C_euk"/>
</dbReference>
<dbReference type="PANTHER" id="PTHR23410:SF12">
    <property type="entry name" value="LARGE RIBOSOMAL SUBUNIT PROTEIN UL18"/>
    <property type="match status" value="1"/>
</dbReference>
<dbReference type="PANTHER" id="PTHR23410">
    <property type="entry name" value="RIBOSOMAL PROTEIN L5-RELATED"/>
    <property type="match status" value="1"/>
</dbReference>
<dbReference type="Pfam" id="PF14204">
    <property type="entry name" value="Ribosomal_L18_c"/>
    <property type="match status" value="1"/>
</dbReference>
<dbReference type="Pfam" id="PF17144">
    <property type="entry name" value="Ribosomal_L5e"/>
    <property type="match status" value="1"/>
</dbReference>
<dbReference type="PRINTS" id="PR00058">
    <property type="entry name" value="RIBOSOMALL5"/>
</dbReference>
<dbReference type="SUPFAM" id="SSF53137">
    <property type="entry name" value="Translational machinery components"/>
    <property type="match status" value="1"/>
</dbReference>
<organism>
    <name type="scientific">Bombyx mori</name>
    <name type="common">Silk moth</name>
    <dbReference type="NCBI Taxonomy" id="7091"/>
    <lineage>
        <taxon>Eukaryota</taxon>
        <taxon>Metazoa</taxon>
        <taxon>Ecdysozoa</taxon>
        <taxon>Arthropoda</taxon>
        <taxon>Hexapoda</taxon>
        <taxon>Insecta</taxon>
        <taxon>Pterygota</taxon>
        <taxon>Neoptera</taxon>
        <taxon>Endopterygota</taxon>
        <taxon>Lepidoptera</taxon>
        <taxon>Glossata</taxon>
        <taxon>Ditrysia</taxon>
        <taxon>Bombycoidea</taxon>
        <taxon>Bombycidae</taxon>
        <taxon>Bombycinae</taxon>
        <taxon>Bombyx</taxon>
    </lineage>
</organism>
<reference key="1">
    <citation type="submission" date="1997-06" db="EMBL/GenBank/DDBJ databases">
        <authorList>
            <person name="Yang C.S."/>
            <person name="Sehnal F."/>
        </authorList>
    </citation>
    <scope>NUCLEOTIDE SEQUENCE [MRNA]</scope>
    <source>
        <tissue>Silk gland</tissue>
    </source>
</reference>
<reference key="2">
    <citation type="submission" date="2004-09" db="EMBL/GenBank/DDBJ databases">
        <title>Ribosomal proteins of Bombyx mori.</title>
        <authorList>
            <person name="Heckel D.G."/>
            <person name="Morgan M."/>
            <person name="Shimada T."/>
            <person name="Mita K."/>
        </authorList>
    </citation>
    <scope>NUCLEOTIDE SEQUENCE [MRNA]</scope>
    <source>
        <strain>C108</strain>
    </source>
</reference>